<comment type="function">
    <text evidence="1">Catalyzes the reversible conversion of 2-phosphoglycerate (2-PG) into phosphoenolpyruvate (PEP). It is essential for the degradation of carbohydrates via glycolysis.</text>
</comment>
<comment type="catalytic activity">
    <reaction evidence="1">
        <text>(2R)-2-phosphoglycerate = phosphoenolpyruvate + H2O</text>
        <dbReference type="Rhea" id="RHEA:10164"/>
        <dbReference type="ChEBI" id="CHEBI:15377"/>
        <dbReference type="ChEBI" id="CHEBI:58289"/>
        <dbReference type="ChEBI" id="CHEBI:58702"/>
        <dbReference type="EC" id="4.2.1.11"/>
    </reaction>
</comment>
<comment type="cofactor">
    <cofactor evidence="1">
        <name>Mg(2+)</name>
        <dbReference type="ChEBI" id="CHEBI:18420"/>
    </cofactor>
    <text evidence="1">Binds a second Mg(2+) ion via substrate during catalysis.</text>
</comment>
<comment type="pathway">
    <text evidence="1">Carbohydrate degradation; glycolysis; pyruvate from D-glyceraldehyde 3-phosphate: step 4/5.</text>
</comment>
<comment type="subcellular location">
    <subcellularLocation>
        <location evidence="1">Cytoplasm</location>
    </subcellularLocation>
    <subcellularLocation>
        <location evidence="1">Secreted</location>
    </subcellularLocation>
    <subcellularLocation>
        <location evidence="1">Cell surface</location>
    </subcellularLocation>
    <text evidence="1">Fractions of enolase are present in both the cytoplasm and on the cell surface.</text>
</comment>
<comment type="similarity">
    <text evidence="1">Belongs to the enolase family.</text>
</comment>
<accession>A3PAS6</accession>
<dbReference type="EC" id="4.2.1.11" evidence="1"/>
<dbReference type="EMBL" id="CP000576">
    <property type="protein sequence ID" value="ABO16851.1"/>
    <property type="molecule type" value="Genomic_DNA"/>
</dbReference>
<dbReference type="RefSeq" id="WP_011862251.1">
    <property type="nucleotide sequence ID" value="NC_009091.1"/>
</dbReference>
<dbReference type="SMR" id="A3PAS6"/>
<dbReference type="STRING" id="167546.P9301_02281"/>
<dbReference type="KEGG" id="pmg:P9301_02281"/>
<dbReference type="eggNOG" id="COG0148">
    <property type="taxonomic scope" value="Bacteria"/>
</dbReference>
<dbReference type="HOGENOM" id="CLU_031223_2_1_3"/>
<dbReference type="OrthoDB" id="9804716at2"/>
<dbReference type="UniPathway" id="UPA00109">
    <property type="reaction ID" value="UER00187"/>
</dbReference>
<dbReference type="Proteomes" id="UP000001430">
    <property type="component" value="Chromosome"/>
</dbReference>
<dbReference type="GO" id="GO:0009986">
    <property type="term" value="C:cell surface"/>
    <property type="evidence" value="ECO:0007669"/>
    <property type="project" value="UniProtKB-SubCell"/>
</dbReference>
<dbReference type="GO" id="GO:0005576">
    <property type="term" value="C:extracellular region"/>
    <property type="evidence" value="ECO:0007669"/>
    <property type="project" value="UniProtKB-SubCell"/>
</dbReference>
<dbReference type="GO" id="GO:0000015">
    <property type="term" value="C:phosphopyruvate hydratase complex"/>
    <property type="evidence" value="ECO:0007669"/>
    <property type="project" value="InterPro"/>
</dbReference>
<dbReference type="GO" id="GO:0000287">
    <property type="term" value="F:magnesium ion binding"/>
    <property type="evidence" value="ECO:0007669"/>
    <property type="project" value="UniProtKB-UniRule"/>
</dbReference>
<dbReference type="GO" id="GO:0004634">
    <property type="term" value="F:phosphopyruvate hydratase activity"/>
    <property type="evidence" value="ECO:0007669"/>
    <property type="project" value="UniProtKB-UniRule"/>
</dbReference>
<dbReference type="GO" id="GO:0006096">
    <property type="term" value="P:glycolytic process"/>
    <property type="evidence" value="ECO:0007669"/>
    <property type="project" value="UniProtKB-UniRule"/>
</dbReference>
<dbReference type="CDD" id="cd03313">
    <property type="entry name" value="enolase"/>
    <property type="match status" value="1"/>
</dbReference>
<dbReference type="FunFam" id="3.20.20.120:FF:000001">
    <property type="entry name" value="Enolase"/>
    <property type="match status" value="1"/>
</dbReference>
<dbReference type="FunFam" id="3.30.390.10:FF:000001">
    <property type="entry name" value="Enolase"/>
    <property type="match status" value="1"/>
</dbReference>
<dbReference type="Gene3D" id="3.20.20.120">
    <property type="entry name" value="Enolase-like C-terminal domain"/>
    <property type="match status" value="1"/>
</dbReference>
<dbReference type="Gene3D" id="3.30.390.10">
    <property type="entry name" value="Enolase-like, N-terminal domain"/>
    <property type="match status" value="1"/>
</dbReference>
<dbReference type="HAMAP" id="MF_00318">
    <property type="entry name" value="Enolase"/>
    <property type="match status" value="1"/>
</dbReference>
<dbReference type="InterPro" id="IPR000941">
    <property type="entry name" value="Enolase"/>
</dbReference>
<dbReference type="InterPro" id="IPR036849">
    <property type="entry name" value="Enolase-like_C_sf"/>
</dbReference>
<dbReference type="InterPro" id="IPR029017">
    <property type="entry name" value="Enolase-like_N"/>
</dbReference>
<dbReference type="InterPro" id="IPR020810">
    <property type="entry name" value="Enolase_C"/>
</dbReference>
<dbReference type="InterPro" id="IPR020809">
    <property type="entry name" value="Enolase_CS"/>
</dbReference>
<dbReference type="InterPro" id="IPR020811">
    <property type="entry name" value="Enolase_N"/>
</dbReference>
<dbReference type="NCBIfam" id="TIGR01060">
    <property type="entry name" value="eno"/>
    <property type="match status" value="1"/>
</dbReference>
<dbReference type="PANTHER" id="PTHR11902">
    <property type="entry name" value="ENOLASE"/>
    <property type="match status" value="1"/>
</dbReference>
<dbReference type="PANTHER" id="PTHR11902:SF1">
    <property type="entry name" value="ENOLASE"/>
    <property type="match status" value="1"/>
</dbReference>
<dbReference type="Pfam" id="PF00113">
    <property type="entry name" value="Enolase_C"/>
    <property type="match status" value="1"/>
</dbReference>
<dbReference type="Pfam" id="PF03952">
    <property type="entry name" value="Enolase_N"/>
    <property type="match status" value="1"/>
</dbReference>
<dbReference type="PIRSF" id="PIRSF001400">
    <property type="entry name" value="Enolase"/>
    <property type="match status" value="1"/>
</dbReference>
<dbReference type="PRINTS" id="PR00148">
    <property type="entry name" value="ENOLASE"/>
</dbReference>
<dbReference type="SFLD" id="SFLDF00002">
    <property type="entry name" value="enolase"/>
    <property type="match status" value="1"/>
</dbReference>
<dbReference type="SFLD" id="SFLDG00178">
    <property type="entry name" value="enolase"/>
    <property type="match status" value="1"/>
</dbReference>
<dbReference type="SMART" id="SM01192">
    <property type="entry name" value="Enolase_C"/>
    <property type="match status" value="1"/>
</dbReference>
<dbReference type="SMART" id="SM01193">
    <property type="entry name" value="Enolase_N"/>
    <property type="match status" value="1"/>
</dbReference>
<dbReference type="SUPFAM" id="SSF51604">
    <property type="entry name" value="Enolase C-terminal domain-like"/>
    <property type="match status" value="1"/>
</dbReference>
<dbReference type="SUPFAM" id="SSF54826">
    <property type="entry name" value="Enolase N-terminal domain-like"/>
    <property type="match status" value="1"/>
</dbReference>
<dbReference type="PROSITE" id="PS00164">
    <property type="entry name" value="ENOLASE"/>
    <property type="match status" value="1"/>
</dbReference>
<gene>
    <name evidence="1" type="primary">eno</name>
    <name type="ordered locus">P9301_02281</name>
</gene>
<keyword id="KW-0963">Cytoplasm</keyword>
<keyword id="KW-0324">Glycolysis</keyword>
<keyword id="KW-0456">Lyase</keyword>
<keyword id="KW-0460">Magnesium</keyword>
<keyword id="KW-0479">Metal-binding</keyword>
<keyword id="KW-1185">Reference proteome</keyword>
<keyword id="KW-0964">Secreted</keyword>
<evidence type="ECO:0000255" key="1">
    <source>
        <dbReference type="HAMAP-Rule" id="MF_00318"/>
    </source>
</evidence>
<protein>
    <recommendedName>
        <fullName evidence="1">Enolase</fullName>
        <ecNumber evidence="1">4.2.1.11</ecNumber>
    </recommendedName>
    <alternativeName>
        <fullName evidence="1">2-phospho-D-glycerate hydro-lyase</fullName>
    </alternativeName>
    <alternativeName>
        <fullName evidence="1">2-phosphoglycerate dehydratase</fullName>
    </alternativeName>
</protein>
<name>ENO_PROM0</name>
<proteinExistence type="inferred from homology"/>
<sequence>MKETIEFLIDTVEARQVLDSRGNPTVEAEVFLECGASGRAIVPSGASTGAHEAHELRDGGSKYMGKGVLNAVNKIHETISPALCGLSSLDQIAVDKLMIEIDGTPNKSNLGANSILAVSLATARASANALDIPLYRYLGDPLSNLLPVPLMNVINGGAHAPNSLDFQEFMLVPHGVNNFSESLRMGTEIFHSLKSLLDQKGLSTAVGDEGGFAPNLSSSEEAGDLLLEAIQKAGFKPGEQVSLALDAASTEFYSDGIYKYEGKSLNSSEMISYLSRLVSNYPIVSIEDGLAEDDWEGWSELNKELGNKVQLVGDDLFVTNTERLRKGIMEKSANSILIKVNQIGTLTETLEAIELAKMSGFTSVISHRSGETEDTTIADLSVATRSGQIKTGSLSRSERIAKYNRLLKIEEELGNQARFAGALGLGPKNI</sequence>
<feature type="chain" id="PRO_1000019233" description="Enolase">
    <location>
        <begin position="1"/>
        <end position="430"/>
    </location>
</feature>
<feature type="active site" description="Proton donor" evidence="1">
    <location>
        <position position="209"/>
    </location>
</feature>
<feature type="active site" description="Proton acceptor" evidence="1">
    <location>
        <position position="339"/>
    </location>
</feature>
<feature type="binding site" evidence="1">
    <location>
        <position position="167"/>
    </location>
    <ligand>
        <name>(2R)-2-phosphoglycerate</name>
        <dbReference type="ChEBI" id="CHEBI:58289"/>
    </ligand>
</feature>
<feature type="binding site" evidence="1">
    <location>
        <position position="246"/>
    </location>
    <ligand>
        <name>Mg(2+)</name>
        <dbReference type="ChEBI" id="CHEBI:18420"/>
    </ligand>
</feature>
<feature type="binding site" evidence="1">
    <location>
        <position position="287"/>
    </location>
    <ligand>
        <name>Mg(2+)</name>
        <dbReference type="ChEBI" id="CHEBI:18420"/>
    </ligand>
</feature>
<feature type="binding site" evidence="1">
    <location>
        <position position="314"/>
    </location>
    <ligand>
        <name>Mg(2+)</name>
        <dbReference type="ChEBI" id="CHEBI:18420"/>
    </ligand>
</feature>
<feature type="binding site" evidence="1">
    <location>
        <position position="339"/>
    </location>
    <ligand>
        <name>(2R)-2-phosphoglycerate</name>
        <dbReference type="ChEBI" id="CHEBI:58289"/>
    </ligand>
</feature>
<feature type="binding site" evidence="1">
    <location>
        <position position="368"/>
    </location>
    <ligand>
        <name>(2R)-2-phosphoglycerate</name>
        <dbReference type="ChEBI" id="CHEBI:58289"/>
    </ligand>
</feature>
<feature type="binding site" evidence="1">
    <location>
        <position position="369"/>
    </location>
    <ligand>
        <name>(2R)-2-phosphoglycerate</name>
        <dbReference type="ChEBI" id="CHEBI:58289"/>
    </ligand>
</feature>
<feature type="binding site" evidence="1">
    <location>
        <position position="390"/>
    </location>
    <ligand>
        <name>(2R)-2-phosphoglycerate</name>
        <dbReference type="ChEBI" id="CHEBI:58289"/>
    </ligand>
</feature>
<reference key="1">
    <citation type="journal article" date="2007" name="PLoS Genet.">
        <title>Patterns and implications of gene gain and loss in the evolution of Prochlorococcus.</title>
        <authorList>
            <person name="Kettler G.C."/>
            <person name="Martiny A.C."/>
            <person name="Huang K."/>
            <person name="Zucker J."/>
            <person name="Coleman M.L."/>
            <person name="Rodrigue S."/>
            <person name="Chen F."/>
            <person name="Lapidus A."/>
            <person name="Ferriera S."/>
            <person name="Johnson J."/>
            <person name="Steglich C."/>
            <person name="Church G.M."/>
            <person name="Richardson P."/>
            <person name="Chisholm S.W."/>
        </authorList>
    </citation>
    <scope>NUCLEOTIDE SEQUENCE [LARGE SCALE GENOMIC DNA]</scope>
    <source>
        <strain>MIT 9301</strain>
    </source>
</reference>
<organism>
    <name type="scientific">Prochlorococcus marinus (strain MIT 9301)</name>
    <dbReference type="NCBI Taxonomy" id="167546"/>
    <lineage>
        <taxon>Bacteria</taxon>
        <taxon>Bacillati</taxon>
        <taxon>Cyanobacteriota</taxon>
        <taxon>Cyanophyceae</taxon>
        <taxon>Synechococcales</taxon>
        <taxon>Prochlorococcaceae</taxon>
        <taxon>Prochlorococcus</taxon>
    </lineage>
</organism>